<proteinExistence type="inferred from homology"/>
<accession>O79997</accession>
<accession>Q1XIK8</accession>
<name>CYB_SOREX</name>
<feature type="chain" id="PRO_0000061557" description="Cytochrome b">
    <location>
        <begin position="1"/>
        <end position="379"/>
    </location>
</feature>
<feature type="transmembrane region" description="Helical" evidence="2">
    <location>
        <begin position="33"/>
        <end position="53"/>
    </location>
</feature>
<feature type="transmembrane region" description="Helical" evidence="2">
    <location>
        <begin position="77"/>
        <end position="98"/>
    </location>
</feature>
<feature type="transmembrane region" description="Helical" evidence="2">
    <location>
        <begin position="113"/>
        <end position="133"/>
    </location>
</feature>
<feature type="transmembrane region" description="Helical" evidence="2">
    <location>
        <begin position="178"/>
        <end position="198"/>
    </location>
</feature>
<feature type="transmembrane region" description="Helical" evidence="2">
    <location>
        <begin position="226"/>
        <end position="246"/>
    </location>
</feature>
<feature type="transmembrane region" description="Helical" evidence="2">
    <location>
        <begin position="288"/>
        <end position="308"/>
    </location>
</feature>
<feature type="transmembrane region" description="Helical" evidence="2">
    <location>
        <begin position="320"/>
        <end position="340"/>
    </location>
</feature>
<feature type="transmembrane region" description="Helical" evidence="2">
    <location>
        <begin position="347"/>
        <end position="367"/>
    </location>
</feature>
<feature type="binding site" description="axial binding residue" evidence="2">
    <location>
        <position position="83"/>
    </location>
    <ligand>
        <name>heme b</name>
        <dbReference type="ChEBI" id="CHEBI:60344"/>
        <label>b562</label>
    </ligand>
    <ligandPart>
        <name>Fe</name>
        <dbReference type="ChEBI" id="CHEBI:18248"/>
    </ligandPart>
</feature>
<feature type="binding site" description="axial binding residue" evidence="2">
    <location>
        <position position="97"/>
    </location>
    <ligand>
        <name>heme b</name>
        <dbReference type="ChEBI" id="CHEBI:60344"/>
        <label>b566</label>
    </ligand>
    <ligandPart>
        <name>Fe</name>
        <dbReference type="ChEBI" id="CHEBI:18248"/>
    </ligandPart>
</feature>
<feature type="binding site" description="axial binding residue" evidence="2">
    <location>
        <position position="182"/>
    </location>
    <ligand>
        <name>heme b</name>
        <dbReference type="ChEBI" id="CHEBI:60344"/>
        <label>b562</label>
    </ligand>
    <ligandPart>
        <name>Fe</name>
        <dbReference type="ChEBI" id="CHEBI:18248"/>
    </ligandPart>
</feature>
<feature type="binding site" description="axial binding residue" evidence="2">
    <location>
        <position position="196"/>
    </location>
    <ligand>
        <name>heme b</name>
        <dbReference type="ChEBI" id="CHEBI:60344"/>
        <label>b566</label>
    </ligand>
    <ligandPart>
        <name>Fe</name>
        <dbReference type="ChEBI" id="CHEBI:18248"/>
    </ligandPart>
</feature>
<feature type="binding site" evidence="2">
    <location>
        <position position="201"/>
    </location>
    <ligand>
        <name>a ubiquinone</name>
        <dbReference type="ChEBI" id="CHEBI:16389"/>
    </ligand>
</feature>
<keyword id="KW-0249">Electron transport</keyword>
<keyword id="KW-0349">Heme</keyword>
<keyword id="KW-0408">Iron</keyword>
<keyword id="KW-0472">Membrane</keyword>
<keyword id="KW-0479">Metal-binding</keyword>
<keyword id="KW-0496">Mitochondrion</keyword>
<keyword id="KW-0999">Mitochondrion inner membrane</keyword>
<keyword id="KW-0679">Respiratory chain</keyword>
<keyword id="KW-0812">Transmembrane</keyword>
<keyword id="KW-1133">Transmembrane helix</keyword>
<keyword id="KW-0813">Transport</keyword>
<keyword id="KW-0830">Ubiquinone</keyword>
<sequence>MTNLRKTHPLMKIINNSFIDLPAPSNISSWWNFGSLLGVCLIIQILTGLFLAMHYTSDTMTAFSSVTHICRDVNYGWLIRYLHANGASMFFICLFLHVGRGLYYGSYMYLETWNIGVLLLFAVMATAFMGYVLPWGQMSFWGATVITNLLSAIPYIGSDLVEWIWGGFSVDKATLTRFFAFHFILPFIIAALAGVHLLFLHETGSNNPSGLSSDADKIPFHPYYTIKDILGVLLLILVLTSLVLFSPDLLGDPDNYTPANPLNTPPHIKPEWYFLFAYAILRSIPNKLGGVLALVLSILILAVMPFLHTSKQRSMMFRPFSQCLFWILVADLLTLTWIGGQPVEHPYIIIGQLASILYFLLILVIMPITSLLENNLLKW</sequence>
<reference key="1">
    <citation type="submission" date="2004-03" db="EMBL/GenBank/DDBJ databases">
        <title>Molecular phylogenetics of the Soricidae (Insectivora, Mammalia) based on mitochondrial cytochrome b gene sequences.</title>
        <authorList>
            <person name="Ohdachi S.D."/>
            <person name="Iwasa M.A."/>
            <person name="Abe H."/>
            <person name="Vogel P."/>
            <person name="Oshida T."/>
            <person name="Lin L.K."/>
            <person name="Hasegawa M."/>
        </authorList>
    </citation>
    <scope>NUCLEOTIDE SEQUENCE [GENOMIC DNA]</scope>
    <source>
        <strain>Isolate DMSI4456</strain>
        <tissue>Liver</tissue>
    </source>
</reference>
<reference key="2">
    <citation type="journal article" date="1999" name="Mol. Phylogenet. Evol.">
        <title>Molecular phylogeny and evolution of Sorex shrews (Soricidae: Insectivora) inferred from mitochondrial DNA sequence data.</title>
        <authorList>
            <person name="Fumagalli L."/>
            <person name="Taberlet P."/>
            <person name="Stewart D.T."/>
            <person name="Gielly L."/>
            <person name="Hausser J."/>
            <person name="Vogel P."/>
        </authorList>
    </citation>
    <scope>NUCLEOTIDE SEQUENCE [GENOMIC DNA] OF 44-379</scope>
</reference>
<dbReference type="EMBL" id="AB175123">
    <property type="protein sequence ID" value="BAE92688.1"/>
    <property type="molecule type" value="Genomic_DNA"/>
</dbReference>
<dbReference type="EMBL" id="AJ000440">
    <property type="protein sequence ID" value="CAA04084.1"/>
    <property type="molecule type" value="Genomic_DNA"/>
</dbReference>
<dbReference type="EMBL" id="AJ000441">
    <property type="protein sequence ID" value="CAA04085.1"/>
    <property type="molecule type" value="Genomic_DNA"/>
</dbReference>
<dbReference type="SMR" id="O79997"/>
<dbReference type="GO" id="GO:0005743">
    <property type="term" value="C:mitochondrial inner membrane"/>
    <property type="evidence" value="ECO:0007669"/>
    <property type="project" value="UniProtKB-SubCell"/>
</dbReference>
<dbReference type="GO" id="GO:0045275">
    <property type="term" value="C:respiratory chain complex III"/>
    <property type="evidence" value="ECO:0007669"/>
    <property type="project" value="InterPro"/>
</dbReference>
<dbReference type="GO" id="GO:0046872">
    <property type="term" value="F:metal ion binding"/>
    <property type="evidence" value="ECO:0007669"/>
    <property type="project" value="UniProtKB-KW"/>
</dbReference>
<dbReference type="GO" id="GO:0008121">
    <property type="term" value="F:ubiquinol-cytochrome-c reductase activity"/>
    <property type="evidence" value="ECO:0007669"/>
    <property type="project" value="InterPro"/>
</dbReference>
<dbReference type="GO" id="GO:0006122">
    <property type="term" value="P:mitochondrial electron transport, ubiquinol to cytochrome c"/>
    <property type="evidence" value="ECO:0007669"/>
    <property type="project" value="TreeGrafter"/>
</dbReference>
<dbReference type="CDD" id="cd00290">
    <property type="entry name" value="cytochrome_b_C"/>
    <property type="match status" value="1"/>
</dbReference>
<dbReference type="CDD" id="cd00284">
    <property type="entry name" value="Cytochrome_b_N"/>
    <property type="match status" value="1"/>
</dbReference>
<dbReference type="FunFam" id="1.20.810.10:FF:000002">
    <property type="entry name" value="Cytochrome b"/>
    <property type="match status" value="1"/>
</dbReference>
<dbReference type="Gene3D" id="1.20.810.10">
    <property type="entry name" value="Cytochrome Bc1 Complex, Chain C"/>
    <property type="match status" value="1"/>
</dbReference>
<dbReference type="InterPro" id="IPR005798">
    <property type="entry name" value="Cyt_b/b6_C"/>
</dbReference>
<dbReference type="InterPro" id="IPR036150">
    <property type="entry name" value="Cyt_b/b6_C_sf"/>
</dbReference>
<dbReference type="InterPro" id="IPR005797">
    <property type="entry name" value="Cyt_b/b6_N"/>
</dbReference>
<dbReference type="InterPro" id="IPR027387">
    <property type="entry name" value="Cytb/b6-like_sf"/>
</dbReference>
<dbReference type="InterPro" id="IPR030689">
    <property type="entry name" value="Cytochrome_b"/>
</dbReference>
<dbReference type="InterPro" id="IPR048260">
    <property type="entry name" value="Cytochrome_b_C_euk/bac"/>
</dbReference>
<dbReference type="InterPro" id="IPR048259">
    <property type="entry name" value="Cytochrome_b_N_euk/bac"/>
</dbReference>
<dbReference type="InterPro" id="IPR016174">
    <property type="entry name" value="Di-haem_cyt_TM"/>
</dbReference>
<dbReference type="PANTHER" id="PTHR19271">
    <property type="entry name" value="CYTOCHROME B"/>
    <property type="match status" value="1"/>
</dbReference>
<dbReference type="PANTHER" id="PTHR19271:SF16">
    <property type="entry name" value="CYTOCHROME B"/>
    <property type="match status" value="1"/>
</dbReference>
<dbReference type="Pfam" id="PF00032">
    <property type="entry name" value="Cytochrom_B_C"/>
    <property type="match status" value="1"/>
</dbReference>
<dbReference type="Pfam" id="PF00033">
    <property type="entry name" value="Cytochrome_B"/>
    <property type="match status" value="1"/>
</dbReference>
<dbReference type="PIRSF" id="PIRSF038885">
    <property type="entry name" value="COB"/>
    <property type="match status" value="1"/>
</dbReference>
<dbReference type="SUPFAM" id="SSF81648">
    <property type="entry name" value="a domain/subunit of cytochrome bc1 complex (Ubiquinol-cytochrome c reductase)"/>
    <property type="match status" value="1"/>
</dbReference>
<dbReference type="SUPFAM" id="SSF81342">
    <property type="entry name" value="Transmembrane di-heme cytochromes"/>
    <property type="match status" value="1"/>
</dbReference>
<dbReference type="PROSITE" id="PS51003">
    <property type="entry name" value="CYTB_CTER"/>
    <property type="match status" value="1"/>
</dbReference>
<dbReference type="PROSITE" id="PS51002">
    <property type="entry name" value="CYTB_NTER"/>
    <property type="match status" value="1"/>
</dbReference>
<comment type="function">
    <text evidence="2">Component of the ubiquinol-cytochrome c reductase complex (complex III or cytochrome b-c1 complex) that is part of the mitochondrial respiratory chain. The b-c1 complex mediates electron transfer from ubiquinol to cytochrome c. Contributes to the generation of a proton gradient across the mitochondrial membrane that is then used for ATP synthesis.</text>
</comment>
<comment type="cofactor">
    <cofactor evidence="2">
        <name>heme b</name>
        <dbReference type="ChEBI" id="CHEBI:60344"/>
    </cofactor>
    <text evidence="2">Binds 2 heme b groups non-covalently.</text>
</comment>
<comment type="subunit">
    <text evidence="2">The cytochrome bc1 complex contains 11 subunits: 3 respiratory subunits (MT-CYB, CYC1 and UQCRFS1), 2 core proteins (UQCRC1 and UQCRC2) and 6 low-molecular weight proteins (UQCRH/QCR6, UQCRB/QCR7, UQCRQ/QCR8, UQCR10/QCR9, UQCR11/QCR10 and a cleavage product of UQCRFS1). This cytochrome bc1 complex then forms a dimer.</text>
</comment>
<comment type="subcellular location">
    <subcellularLocation>
        <location evidence="2">Mitochondrion inner membrane</location>
        <topology evidence="2">Multi-pass membrane protein</topology>
    </subcellularLocation>
</comment>
<comment type="miscellaneous">
    <text evidence="1">Heme 1 (or BL or b562) is low-potential and absorbs at about 562 nm, and heme 2 (or BH or b566) is high-potential and absorbs at about 566 nm.</text>
</comment>
<comment type="similarity">
    <text evidence="3 4">Belongs to the cytochrome b family.</text>
</comment>
<comment type="caution">
    <text evidence="2">The full-length protein contains only eight transmembrane helices, not nine as predicted by bioinformatics tools.</text>
</comment>
<geneLocation type="mitochondrion"/>
<organism>
    <name type="scientific">Sorex excelsus</name>
    <name type="common">Lofty shrew</name>
    <dbReference type="NCBI Taxonomy" id="62901"/>
    <lineage>
        <taxon>Eukaryota</taxon>
        <taxon>Metazoa</taxon>
        <taxon>Chordata</taxon>
        <taxon>Craniata</taxon>
        <taxon>Vertebrata</taxon>
        <taxon>Euteleostomi</taxon>
        <taxon>Mammalia</taxon>
        <taxon>Eutheria</taxon>
        <taxon>Laurasiatheria</taxon>
        <taxon>Eulipotyphla</taxon>
        <taxon>Soricidae</taxon>
        <taxon>Soricinae</taxon>
        <taxon>Sorex</taxon>
    </lineage>
</organism>
<protein>
    <recommendedName>
        <fullName>Cytochrome b</fullName>
    </recommendedName>
    <alternativeName>
        <fullName>Complex III subunit 3</fullName>
    </alternativeName>
    <alternativeName>
        <fullName>Complex III subunit III</fullName>
    </alternativeName>
    <alternativeName>
        <fullName>Cytochrome b-c1 complex subunit 3</fullName>
    </alternativeName>
    <alternativeName>
        <fullName>Ubiquinol-cytochrome-c reductase complex cytochrome b subunit</fullName>
    </alternativeName>
</protein>
<evidence type="ECO:0000250" key="1"/>
<evidence type="ECO:0000250" key="2">
    <source>
        <dbReference type="UniProtKB" id="P00157"/>
    </source>
</evidence>
<evidence type="ECO:0000255" key="3">
    <source>
        <dbReference type="PROSITE-ProRule" id="PRU00967"/>
    </source>
</evidence>
<evidence type="ECO:0000255" key="4">
    <source>
        <dbReference type="PROSITE-ProRule" id="PRU00968"/>
    </source>
</evidence>
<gene>
    <name type="primary">MT-CYB</name>
    <name type="synonym">COB</name>
    <name type="synonym">CYTB</name>
    <name type="synonym">MTCYB</name>
</gene>